<organism>
    <name type="scientific">Rhodopseudomonas palustris (strain BisB18)</name>
    <dbReference type="NCBI Taxonomy" id="316056"/>
    <lineage>
        <taxon>Bacteria</taxon>
        <taxon>Pseudomonadati</taxon>
        <taxon>Pseudomonadota</taxon>
        <taxon>Alphaproteobacteria</taxon>
        <taxon>Hyphomicrobiales</taxon>
        <taxon>Nitrobacteraceae</taxon>
        <taxon>Rhodopseudomonas</taxon>
    </lineage>
</organism>
<feature type="chain" id="PRO_0000320970" description="Protein translocase subunit SecA">
    <location>
        <begin position="1"/>
        <end position="947"/>
    </location>
</feature>
<feature type="region of interest" description="Disordered" evidence="2">
    <location>
        <begin position="905"/>
        <end position="928"/>
    </location>
</feature>
<feature type="binding site" evidence="1">
    <location>
        <position position="87"/>
    </location>
    <ligand>
        <name>ATP</name>
        <dbReference type="ChEBI" id="CHEBI:30616"/>
    </ligand>
</feature>
<feature type="binding site" evidence="1">
    <location>
        <begin position="105"/>
        <end position="109"/>
    </location>
    <ligand>
        <name>ATP</name>
        <dbReference type="ChEBI" id="CHEBI:30616"/>
    </ligand>
</feature>
<feature type="binding site" evidence="1">
    <location>
        <position position="525"/>
    </location>
    <ligand>
        <name>ATP</name>
        <dbReference type="ChEBI" id="CHEBI:30616"/>
    </ligand>
</feature>
<feature type="binding site" evidence="1">
    <location>
        <position position="931"/>
    </location>
    <ligand>
        <name>Zn(2+)</name>
        <dbReference type="ChEBI" id="CHEBI:29105"/>
    </ligand>
</feature>
<feature type="binding site" evidence="1">
    <location>
        <position position="933"/>
    </location>
    <ligand>
        <name>Zn(2+)</name>
        <dbReference type="ChEBI" id="CHEBI:29105"/>
    </ligand>
</feature>
<feature type="binding site" evidence="1">
    <location>
        <position position="942"/>
    </location>
    <ligand>
        <name>Zn(2+)</name>
        <dbReference type="ChEBI" id="CHEBI:29105"/>
    </ligand>
</feature>
<feature type="binding site" evidence="1">
    <location>
        <position position="943"/>
    </location>
    <ligand>
        <name>Zn(2+)</name>
        <dbReference type="ChEBI" id="CHEBI:29105"/>
    </ligand>
</feature>
<evidence type="ECO:0000255" key="1">
    <source>
        <dbReference type="HAMAP-Rule" id="MF_01382"/>
    </source>
</evidence>
<evidence type="ECO:0000256" key="2">
    <source>
        <dbReference type="SAM" id="MobiDB-lite"/>
    </source>
</evidence>
<accession>Q21BY5</accession>
<comment type="function">
    <text evidence="1">Part of the Sec protein translocase complex. Interacts with the SecYEG preprotein conducting channel. Has a central role in coupling the hydrolysis of ATP to the transfer of proteins into and across the cell membrane, serving both as a receptor for the preprotein-SecB complex and as an ATP-driven molecular motor driving the stepwise translocation of polypeptide chains across the membrane.</text>
</comment>
<comment type="catalytic activity">
    <reaction evidence="1">
        <text>ATP + H2O + cellular proteinSide 1 = ADP + phosphate + cellular proteinSide 2.</text>
        <dbReference type="EC" id="7.4.2.8"/>
    </reaction>
</comment>
<comment type="cofactor">
    <cofactor evidence="1">
        <name>Zn(2+)</name>
        <dbReference type="ChEBI" id="CHEBI:29105"/>
    </cofactor>
    <text evidence="1">May bind 1 zinc ion per subunit.</text>
</comment>
<comment type="subunit">
    <text evidence="1">Monomer and homodimer. Part of the essential Sec protein translocation apparatus which comprises SecA, SecYEG and auxiliary proteins SecDF-YajC and YidC.</text>
</comment>
<comment type="subcellular location">
    <subcellularLocation>
        <location evidence="1">Cell inner membrane</location>
        <topology evidence="1">Peripheral membrane protein</topology>
        <orientation evidence="1">Cytoplasmic side</orientation>
    </subcellularLocation>
    <subcellularLocation>
        <location evidence="1">Cytoplasm</location>
    </subcellularLocation>
    <text evidence="1">Distribution is 50-50.</text>
</comment>
<comment type="similarity">
    <text evidence="1">Belongs to the SecA family.</text>
</comment>
<proteinExistence type="inferred from homology"/>
<sequence>MIGALARRLFGSPNDRRIKAYQPRVDAINALEPELVALSDEALRGRTAEFRQQLADGKTLDDILVPAFATVREAAKRTLGQRHFDVQLIGGMVLHEGDIAEMKTGEGKTLVATLAVYLNALAGKGVHVVTVNDYLARRDSAWMGEIYGFLGMTTGVIVHGLDDQQRQAAYACDITYGTNNEYGFDYLRDNMKYRLEDMVQRGHYYAIVDEVDSILIDEARTPLIISGPLDDRSEFYNTIDTFMPSLDKATDYEVDEKQRTVTLTEAGMEHIEVLLRDAGQLKGDSLYDVENVSVVHHVNQALRAHSLFQRDKDYIVRDDEVVIIDEFTGRMMPGRRYSEGLHQALEAKEHVQVQPENQTLASITFQNYFRMYEKLSGMTGTALTEADELFDIYKLEVVEIPTNVQIARLDEDDEVYRTQSEKYAAILAEVERANSRLQPVLVGTASIEKSEVLGEYLKKHGYKQIDFTDPKGMEKLYAAARAGKPAKLFAVLNARFHEQEAYIVAEAGVPGAITIATNMAGRGTDIKLGGSLEMRIQHETVGITDEAEKAAKIELIKADIERFREIVLKAEEVVEVEPAKGNKPAKTLTRPGGLYIMGSERHESRRIDNQLRGRSGRQGDPGRSKFFLSLEDDLMRIFGSDRLDTMLTRLGLKEGEAIIHPWINKALEKAQQKVEARNFDIRKNLLKFDNVQNDQRKEIFDHRISLMKDDSVAETVAGMRHDFIDDIVAKHVPEHAYAEQWDVAGLKEELERVLGLDLPVDEWAKEEGIADEELLTRIEQRVDEHMAAKVGQWGPEVMRYAEKSILLQTLDHLWREHLVMLDHLRNVIGLRGYGQRDPLQEYKSEAFALFEAMITHLREAVTAQLMRVEIVPPEQPQELPPMEGHKFNADTGEDDMAFANVSLAPADNADKTARNPNDPSTWGKVGRNEDCPCGSGKKYKHCHGRYA</sequence>
<gene>
    <name evidence="1" type="primary">secA</name>
    <name type="ordered locus">RPC_0526</name>
</gene>
<keyword id="KW-0067">ATP-binding</keyword>
<keyword id="KW-0997">Cell inner membrane</keyword>
<keyword id="KW-1003">Cell membrane</keyword>
<keyword id="KW-0963">Cytoplasm</keyword>
<keyword id="KW-0472">Membrane</keyword>
<keyword id="KW-0479">Metal-binding</keyword>
<keyword id="KW-0547">Nucleotide-binding</keyword>
<keyword id="KW-0653">Protein transport</keyword>
<keyword id="KW-1278">Translocase</keyword>
<keyword id="KW-0811">Translocation</keyword>
<keyword id="KW-0813">Transport</keyword>
<keyword id="KW-0862">Zinc</keyword>
<dbReference type="EC" id="7.4.2.8" evidence="1"/>
<dbReference type="EMBL" id="CP000301">
    <property type="protein sequence ID" value="ABD86101.1"/>
    <property type="molecule type" value="Genomic_DNA"/>
</dbReference>
<dbReference type="SMR" id="Q21BY5"/>
<dbReference type="STRING" id="316056.RPC_0526"/>
<dbReference type="KEGG" id="rpc:RPC_0526"/>
<dbReference type="eggNOG" id="COG0653">
    <property type="taxonomic scope" value="Bacteria"/>
</dbReference>
<dbReference type="HOGENOM" id="CLU_005314_3_0_5"/>
<dbReference type="OrthoDB" id="9805579at2"/>
<dbReference type="GO" id="GO:0031522">
    <property type="term" value="C:cell envelope Sec protein transport complex"/>
    <property type="evidence" value="ECO:0007669"/>
    <property type="project" value="TreeGrafter"/>
</dbReference>
<dbReference type="GO" id="GO:0005829">
    <property type="term" value="C:cytosol"/>
    <property type="evidence" value="ECO:0007669"/>
    <property type="project" value="TreeGrafter"/>
</dbReference>
<dbReference type="GO" id="GO:0005886">
    <property type="term" value="C:plasma membrane"/>
    <property type="evidence" value="ECO:0007669"/>
    <property type="project" value="UniProtKB-SubCell"/>
</dbReference>
<dbReference type="GO" id="GO:0005524">
    <property type="term" value="F:ATP binding"/>
    <property type="evidence" value="ECO:0007669"/>
    <property type="project" value="UniProtKB-UniRule"/>
</dbReference>
<dbReference type="GO" id="GO:0046872">
    <property type="term" value="F:metal ion binding"/>
    <property type="evidence" value="ECO:0007669"/>
    <property type="project" value="UniProtKB-KW"/>
</dbReference>
<dbReference type="GO" id="GO:0008564">
    <property type="term" value="F:protein-exporting ATPase activity"/>
    <property type="evidence" value="ECO:0007669"/>
    <property type="project" value="UniProtKB-EC"/>
</dbReference>
<dbReference type="GO" id="GO:0065002">
    <property type="term" value="P:intracellular protein transmembrane transport"/>
    <property type="evidence" value="ECO:0007669"/>
    <property type="project" value="UniProtKB-UniRule"/>
</dbReference>
<dbReference type="GO" id="GO:0017038">
    <property type="term" value="P:protein import"/>
    <property type="evidence" value="ECO:0007669"/>
    <property type="project" value="InterPro"/>
</dbReference>
<dbReference type="GO" id="GO:0006605">
    <property type="term" value="P:protein targeting"/>
    <property type="evidence" value="ECO:0007669"/>
    <property type="project" value="UniProtKB-UniRule"/>
</dbReference>
<dbReference type="GO" id="GO:0043952">
    <property type="term" value="P:protein transport by the Sec complex"/>
    <property type="evidence" value="ECO:0007669"/>
    <property type="project" value="TreeGrafter"/>
</dbReference>
<dbReference type="CDD" id="cd17928">
    <property type="entry name" value="DEXDc_SecA"/>
    <property type="match status" value="1"/>
</dbReference>
<dbReference type="CDD" id="cd18803">
    <property type="entry name" value="SF2_C_secA"/>
    <property type="match status" value="1"/>
</dbReference>
<dbReference type="FunFam" id="3.90.1440.10:FF:000001">
    <property type="entry name" value="Preprotein translocase subunit SecA"/>
    <property type="match status" value="1"/>
</dbReference>
<dbReference type="FunFam" id="1.10.3060.10:FF:000003">
    <property type="entry name" value="Protein translocase subunit SecA"/>
    <property type="match status" value="1"/>
</dbReference>
<dbReference type="FunFam" id="3.40.50.300:FF:000334">
    <property type="entry name" value="Protein translocase subunit SecA"/>
    <property type="match status" value="1"/>
</dbReference>
<dbReference type="FunFam" id="3.40.50.300:FF:001790">
    <property type="entry name" value="Protein translocase subunit SecA"/>
    <property type="match status" value="1"/>
</dbReference>
<dbReference type="Gene3D" id="1.10.3060.10">
    <property type="entry name" value="Helical scaffold and wing domains of SecA"/>
    <property type="match status" value="1"/>
</dbReference>
<dbReference type="Gene3D" id="3.40.50.300">
    <property type="entry name" value="P-loop containing nucleotide triphosphate hydrolases"/>
    <property type="match status" value="2"/>
</dbReference>
<dbReference type="Gene3D" id="3.90.1440.10">
    <property type="entry name" value="SecA, preprotein cross-linking domain"/>
    <property type="match status" value="1"/>
</dbReference>
<dbReference type="HAMAP" id="MF_01382">
    <property type="entry name" value="SecA"/>
    <property type="match status" value="1"/>
</dbReference>
<dbReference type="InterPro" id="IPR014001">
    <property type="entry name" value="Helicase_ATP-bd"/>
</dbReference>
<dbReference type="InterPro" id="IPR027417">
    <property type="entry name" value="P-loop_NTPase"/>
</dbReference>
<dbReference type="InterPro" id="IPR004027">
    <property type="entry name" value="SEC_C_motif"/>
</dbReference>
<dbReference type="InterPro" id="IPR000185">
    <property type="entry name" value="SecA"/>
</dbReference>
<dbReference type="InterPro" id="IPR020937">
    <property type="entry name" value="SecA_CS"/>
</dbReference>
<dbReference type="InterPro" id="IPR011115">
    <property type="entry name" value="SecA_DEAD"/>
</dbReference>
<dbReference type="InterPro" id="IPR014018">
    <property type="entry name" value="SecA_motor_DEAD"/>
</dbReference>
<dbReference type="InterPro" id="IPR011130">
    <property type="entry name" value="SecA_preprotein_X-link_dom"/>
</dbReference>
<dbReference type="InterPro" id="IPR044722">
    <property type="entry name" value="SecA_SF2_C"/>
</dbReference>
<dbReference type="InterPro" id="IPR011116">
    <property type="entry name" value="SecA_Wing/Scaffold"/>
</dbReference>
<dbReference type="InterPro" id="IPR036266">
    <property type="entry name" value="SecA_Wing/Scaffold_sf"/>
</dbReference>
<dbReference type="InterPro" id="IPR036670">
    <property type="entry name" value="SecA_X-link_sf"/>
</dbReference>
<dbReference type="NCBIfam" id="NF009538">
    <property type="entry name" value="PRK12904.1"/>
    <property type="match status" value="1"/>
</dbReference>
<dbReference type="NCBIfam" id="TIGR00963">
    <property type="entry name" value="secA"/>
    <property type="match status" value="1"/>
</dbReference>
<dbReference type="PANTHER" id="PTHR30612:SF0">
    <property type="entry name" value="CHLOROPLAST PROTEIN-TRANSPORTING ATPASE"/>
    <property type="match status" value="1"/>
</dbReference>
<dbReference type="PANTHER" id="PTHR30612">
    <property type="entry name" value="SECA INNER MEMBRANE COMPONENT OF SEC PROTEIN SECRETION SYSTEM"/>
    <property type="match status" value="1"/>
</dbReference>
<dbReference type="Pfam" id="PF21090">
    <property type="entry name" value="P-loop_SecA"/>
    <property type="match status" value="1"/>
</dbReference>
<dbReference type="Pfam" id="PF02810">
    <property type="entry name" value="SEC-C"/>
    <property type="match status" value="1"/>
</dbReference>
<dbReference type="Pfam" id="PF07517">
    <property type="entry name" value="SecA_DEAD"/>
    <property type="match status" value="1"/>
</dbReference>
<dbReference type="Pfam" id="PF01043">
    <property type="entry name" value="SecA_PP_bind"/>
    <property type="match status" value="1"/>
</dbReference>
<dbReference type="Pfam" id="PF07516">
    <property type="entry name" value="SecA_SW"/>
    <property type="match status" value="1"/>
</dbReference>
<dbReference type="PRINTS" id="PR00906">
    <property type="entry name" value="SECA"/>
</dbReference>
<dbReference type="SMART" id="SM00957">
    <property type="entry name" value="SecA_DEAD"/>
    <property type="match status" value="1"/>
</dbReference>
<dbReference type="SMART" id="SM00958">
    <property type="entry name" value="SecA_PP_bind"/>
    <property type="match status" value="1"/>
</dbReference>
<dbReference type="SUPFAM" id="SSF81886">
    <property type="entry name" value="Helical scaffold and wing domains of SecA"/>
    <property type="match status" value="1"/>
</dbReference>
<dbReference type="SUPFAM" id="SSF52540">
    <property type="entry name" value="P-loop containing nucleoside triphosphate hydrolases"/>
    <property type="match status" value="2"/>
</dbReference>
<dbReference type="SUPFAM" id="SSF81767">
    <property type="entry name" value="Pre-protein crosslinking domain of SecA"/>
    <property type="match status" value="1"/>
</dbReference>
<dbReference type="PROSITE" id="PS01312">
    <property type="entry name" value="SECA"/>
    <property type="match status" value="1"/>
</dbReference>
<dbReference type="PROSITE" id="PS51196">
    <property type="entry name" value="SECA_MOTOR_DEAD"/>
    <property type="match status" value="1"/>
</dbReference>
<protein>
    <recommendedName>
        <fullName evidence="1">Protein translocase subunit SecA</fullName>
        <ecNumber evidence="1">7.4.2.8</ecNumber>
    </recommendedName>
</protein>
<name>SECA_RHOPB</name>
<reference key="1">
    <citation type="submission" date="2006-03" db="EMBL/GenBank/DDBJ databases">
        <title>Complete sequence of Rhodopseudomonas palustris BisB18.</title>
        <authorList>
            <consortium name="US DOE Joint Genome Institute"/>
            <person name="Copeland A."/>
            <person name="Lucas S."/>
            <person name="Lapidus A."/>
            <person name="Barry K."/>
            <person name="Detter J.C."/>
            <person name="Glavina del Rio T."/>
            <person name="Hammon N."/>
            <person name="Israni S."/>
            <person name="Dalin E."/>
            <person name="Tice H."/>
            <person name="Pitluck S."/>
            <person name="Chain P."/>
            <person name="Malfatti S."/>
            <person name="Shin M."/>
            <person name="Vergez L."/>
            <person name="Schmutz J."/>
            <person name="Larimer F."/>
            <person name="Land M."/>
            <person name="Hauser L."/>
            <person name="Pelletier D.A."/>
            <person name="Kyrpides N."/>
            <person name="Anderson I."/>
            <person name="Oda Y."/>
            <person name="Harwood C.S."/>
            <person name="Richardson P."/>
        </authorList>
    </citation>
    <scope>NUCLEOTIDE SEQUENCE [LARGE SCALE GENOMIC DNA]</scope>
    <source>
        <strain>BisB18</strain>
    </source>
</reference>